<keyword id="KW-0012">Acyltransferase</keyword>
<keyword id="KW-0963">Cytoplasm</keyword>
<keyword id="KW-0536">Nodulation</keyword>
<keyword id="KW-0808">Transferase</keyword>
<feature type="chain" id="PRO_0000196332" description="Nodulation protein A">
    <location>
        <begin position="1"/>
        <end position="210"/>
    </location>
</feature>
<evidence type="ECO:0000250" key="1"/>
<evidence type="ECO:0000305" key="2"/>
<gene>
    <name type="primary">nodA</name>
</gene>
<dbReference type="EC" id="2.3.1.-"/>
<dbReference type="EMBL" id="U33192">
    <property type="protein sequence ID" value="AAB06561.1"/>
    <property type="molecule type" value="Genomic_DNA"/>
</dbReference>
<dbReference type="RefSeq" id="WP_311738681.1">
    <property type="nucleotide sequence ID" value="NZ_CP104171.1"/>
</dbReference>
<dbReference type="SMR" id="P50347"/>
<dbReference type="GO" id="GO:0005829">
    <property type="term" value="C:cytosol"/>
    <property type="evidence" value="ECO:0007669"/>
    <property type="project" value="InterPro"/>
</dbReference>
<dbReference type="GO" id="GO:0016746">
    <property type="term" value="F:acyltransferase activity"/>
    <property type="evidence" value="ECO:0007669"/>
    <property type="project" value="UniProtKB-UniRule"/>
</dbReference>
<dbReference type="Gene3D" id="3.40.630.30">
    <property type="match status" value="1"/>
</dbReference>
<dbReference type="HAMAP" id="MF_00084">
    <property type="entry name" value="NodA"/>
    <property type="match status" value="1"/>
</dbReference>
<dbReference type="InterPro" id="IPR003484">
    <property type="entry name" value="NodA"/>
</dbReference>
<dbReference type="InterPro" id="IPR020567">
    <property type="entry name" value="Nodulation_prot_NodA_CS"/>
</dbReference>
<dbReference type="NCBIfam" id="TIGR04245">
    <property type="entry name" value="nodulat_NodA"/>
    <property type="match status" value="1"/>
</dbReference>
<dbReference type="NCBIfam" id="NF001974">
    <property type="entry name" value="PRK00756.1"/>
    <property type="match status" value="1"/>
</dbReference>
<dbReference type="Pfam" id="PF02474">
    <property type="entry name" value="NodA"/>
    <property type="match status" value="1"/>
</dbReference>
<dbReference type="PROSITE" id="PS01349">
    <property type="entry name" value="NODA"/>
    <property type="match status" value="1"/>
</dbReference>
<sequence>MNIAVSTTAEGLSMRPQVQWRVRWESELCLADHVELSEFFRKSYGPTGAFNAQPFENNRSWAGARPEVRVIGYDARGIAAHIGLLRRFIKVGEVDLLVGELGLYAVRPDLEGLGITHSMRVMYPVLHELGVPFGFGTVRPALEKHITRMLGRQGLARLLSGIRVRSTHPDVYLNLPTTRSDDALVLVLPIVRSIGEWPTGTVIDRNGPEL</sequence>
<accession>P50347</accession>
<protein>
    <recommendedName>
        <fullName>Nodulation protein A</fullName>
        <ecNumber>2.3.1.-</ecNumber>
    </recommendedName>
</protein>
<reference key="1">
    <citation type="journal article" date="1996" name="J. Bacteriol.">
        <title>Bradyrhizobium (Arachis) sp. strain NC92 contains two nodD genes involved in the repression of nodA and a nolA gene required for the efficient nodulation of host plants.</title>
        <authorList>
            <person name="Gillette W.K."/>
            <person name="Elkan G.H."/>
        </authorList>
    </citation>
    <scope>NUCLEOTIDE SEQUENCE [GENOMIC DNA]</scope>
</reference>
<comment type="function">
    <text evidence="1">N-acyltransferase required for nodulation. Acts in the production of a small, heat-stable compound (Nod) that stimulates mitosis in various plant protoplasts (By similarity).</text>
</comment>
<comment type="subcellular location">
    <subcellularLocation>
        <location evidence="1">Cytoplasm</location>
    </subcellularLocation>
</comment>
<comment type="similarity">
    <text evidence="2">Belongs to the NodA family.</text>
</comment>
<proteinExistence type="inferred from homology"/>
<organism>
    <name type="scientific">Bradyrhizobium sp. (strain NC92)</name>
    <dbReference type="NCBI Taxonomy" id="55395"/>
    <lineage>
        <taxon>Bacteria</taxon>
        <taxon>Pseudomonadati</taxon>
        <taxon>Pseudomonadota</taxon>
        <taxon>Alphaproteobacteria</taxon>
        <taxon>Hyphomicrobiales</taxon>
        <taxon>Nitrobacteraceae</taxon>
        <taxon>Bradyrhizobium</taxon>
    </lineage>
</organism>
<name>NODA_BRASN</name>